<reference key="1">
    <citation type="submission" date="2005-08" db="EMBL/GenBank/DDBJ databases">
        <title>Complete sequence of chromosome 1 of Synechococcus elongatus PCC 7942.</title>
        <authorList>
            <consortium name="US DOE Joint Genome Institute"/>
            <person name="Copeland A."/>
            <person name="Lucas S."/>
            <person name="Lapidus A."/>
            <person name="Barry K."/>
            <person name="Detter J.C."/>
            <person name="Glavina T."/>
            <person name="Hammon N."/>
            <person name="Israni S."/>
            <person name="Pitluck S."/>
            <person name="Schmutz J."/>
            <person name="Larimer F."/>
            <person name="Land M."/>
            <person name="Kyrpides N."/>
            <person name="Lykidis A."/>
            <person name="Golden S."/>
            <person name="Richardson P."/>
        </authorList>
    </citation>
    <scope>NUCLEOTIDE SEQUENCE [LARGE SCALE GENOMIC DNA]</scope>
    <source>
        <strain>ATCC 33912 / PCC 7942 / FACHB-805</strain>
    </source>
</reference>
<feature type="chain" id="PRO_0000377027" description="1,4-dihydroxy-2-naphthoyl-CoA hydrolase">
    <location>
        <begin position="1"/>
        <end position="136"/>
    </location>
</feature>
<feature type="active site" evidence="1">
    <location>
        <position position="16"/>
    </location>
</feature>
<proteinExistence type="inferred from homology"/>
<keyword id="KW-0378">Hydrolase</keyword>
<keyword id="KW-1185">Reference proteome</keyword>
<dbReference type="EC" id="3.1.2.28" evidence="1"/>
<dbReference type="EMBL" id="CP000100">
    <property type="protein sequence ID" value="ABB57774.1"/>
    <property type="molecule type" value="Genomic_DNA"/>
</dbReference>
<dbReference type="RefSeq" id="WP_011244657.1">
    <property type="nucleotide sequence ID" value="NZ_JACJTX010000001.1"/>
</dbReference>
<dbReference type="SMR" id="Q31ME5"/>
<dbReference type="STRING" id="1140.Synpcc7942_1744"/>
<dbReference type="PaxDb" id="1140-Synpcc7942_1744"/>
<dbReference type="KEGG" id="syf:Synpcc7942_1744"/>
<dbReference type="eggNOG" id="COG0824">
    <property type="taxonomic scope" value="Bacteria"/>
</dbReference>
<dbReference type="HOGENOM" id="CLU_101141_5_3_3"/>
<dbReference type="OrthoDB" id="9800856at2"/>
<dbReference type="BioCyc" id="SYNEL:SYNPCC7942_1744-MONOMER"/>
<dbReference type="UniPathway" id="UPA00995"/>
<dbReference type="UniPathway" id="UPA01057">
    <property type="reaction ID" value="UER01033"/>
</dbReference>
<dbReference type="Proteomes" id="UP000889800">
    <property type="component" value="Chromosome"/>
</dbReference>
<dbReference type="GO" id="GO:0061522">
    <property type="term" value="F:1,4-dihydroxy-2-naphthoyl-CoA thioesterase activity"/>
    <property type="evidence" value="ECO:0007669"/>
    <property type="project" value="UniProtKB-EC"/>
</dbReference>
<dbReference type="GO" id="GO:0047617">
    <property type="term" value="F:fatty acyl-CoA hydrolase activity"/>
    <property type="evidence" value="ECO:0007669"/>
    <property type="project" value="TreeGrafter"/>
</dbReference>
<dbReference type="GO" id="GO:0042372">
    <property type="term" value="P:phylloquinone biosynthetic process"/>
    <property type="evidence" value="ECO:0007669"/>
    <property type="project" value="UniProtKB-UniRule"/>
</dbReference>
<dbReference type="CDD" id="cd00586">
    <property type="entry name" value="4HBT"/>
    <property type="match status" value="1"/>
</dbReference>
<dbReference type="Gene3D" id="3.10.129.10">
    <property type="entry name" value="Hotdog Thioesterase"/>
    <property type="match status" value="1"/>
</dbReference>
<dbReference type="HAMAP" id="MF_02101">
    <property type="entry name" value="DHNA_CoA_hydrolase"/>
    <property type="match status" value="1"/>
</dbReference>
<dbReference type="InterPro" id="IPR050563">
    <property type="entry name" value="4-hydroxybenzoyl-CoA_TE"/>
</dbReference>
<dbReference type="InterPro" id="IPR022829">
    <property type="entry name" value="DHNA_CoA_hydrolase"/>
</dbReference>
<dbReference type="InterPro" id="IPR029069">
    <property type="entry name" value="HotDog_dom_sf"/>
</dbReference>
<dbReference type="PANTHER" id="PTHR31793">
    <property type="entry name" value="4-HYDROXYBENZOYL-COA THIOESTERASE FAMILY MEMBER"/>
    <property type="match status" value="1"/>
</dbReference>
<dbReference type="PANTHER" id="PTHR31793:SF37">
    <property type="entry name" value="ACYL-COA THIOESTER HYDROLASE YBGC"/>
    <property type="match status" value="1"/>
</dbReference>
<dbReference type="Pfam" id="PF13279">
    <property type="entry name" value="4HBT_2"/>
    <property type="match status" value="1"/>
</dbReference>
<dbReference type="SUPFAM" id="SSF54637">
    <property type="entry name" value="Thioesterase/thiol ester dehydrase-isomerase"/>
    <property type="match status" value="1"/>
</dbReference>
<comment type="function">
    <text evidence="1">Catalyzes the hydrolysis of 1,4-dihydroxy-2-naphthoyl-CoA (DHNA-CoA) to 1,4-dihydroxy-2-naphthoate (DHNA), a reaction involved in phylloquinone (vitamin K1) biosynthesis.</text>
</comment>
<comment type="catalytic activity">
    <reaction evidence="1">
        <text>1,4-dihydroxy-2-naphthoyl-CoA + H2O = 1,4-dihydroxy-2-naphthoate + CoA + H(+)</text>
        <dbReference type="Rhea" id="RHEA:26309"/>
        <dbReference type="ChEBI" id="CHEBI:11173"/>
        <dbReference type="ChEBI" id="CHEBI:15377"/>
        <dbReference type="ChEBI" id="CHEBI:15378"/>
        <dbReference type="ChEBI" id="CHEBI:57287"/>
        <dbReference type="ChEBI" id="CHEBI:58897"/>
        <dbReference type="EC" id="3.1.2.28"/>
    </reaction>
</comment>
<comment type="pathway">
    <text evidence="1">Cofactor biosynthesis; phylloquinone biosynthesis.</text>
</comment>
<comment type="pathway">
    <text evidence="1">Quinol/quinone metabolism; 1,4-dihydroxy-2-naphthoate biosynthesis; 1,4-dihydroxy-2-naphthoate from chorismate: step 7/7.</text>
</comment>
<comment type="similarity">
    <text evidence="1">Belongs to the 4-hydroxybenzoyl-CoA thioesterase family. DHNA-CoA hydrolase subfamily.</text>
</comment>
<accession>Q31ME5</accession>
<name>DNCH_SYNE7</name>
<gene>
    <name type="ordered locus">Synpcc7942_1744</name>
</gene>
<protein>
    <recommendedName>
        <fullName evidence="1">1,4-dihydroxy-2-naphthoyl-CoA hydrolase</fullName>
        <shortName evidence="1">DHNA-CoA hydrolase</shortName>
        <ecNumber evidence="1">3.1.2.28</ecNumber>
    </recommendedName>
    <alternativeName>
        <fullName evidence="1">DHNA-CoA thioesterase</fullName>
    </alternativeName>
</protein>
<evidence type="ECO:0000255" key="1">
    <source>
        <dbReference type="HAMAP-Rule" id="MF_02101"/>
    </source>
</evidence>
<organism>
    <name type="scientific">Synechococcus elongatus (strain ATCC 33912 / PCC 7942 / FACHB-805)</name>
    <name type="common">Anacystis nidulans R2</name>
    <dbReference type="NCBI Taxonomy" id="1140"/>
    <lineage>
        <taxon>Bacteria</taxon>
        <taxon>Bacillati</taxon>
        <taxon>Cyanobacteriota</taxon>
        <taxon>Cyanophyceae</taxon>
        <taxon>Synechococcales</taxon>
        <taxon>Synechococcaceae</taxon>
        <taxon>Synechococcus</taxon>
    </lineage>
</organism>
<sequence length="136" mass="15552">MADYQFQRVIRFGDTDAAGVVYFAQLLSICHEAYEAAIAALGIELRSFFSDRGSVILPIVHAEIDYQRPTYCGDRLEIELQATALGRDRFRVDYRLSHNHQPVATAQTIHLCLESQTRQRSPLPERLQDWLQITAD</sequence>